<protein>
    <recommendedName>
        <fullName evidence="15">Protein-arginine N-acetylglucosaminyltransferase NleB</fullName>
        <shortName evidence="15">Arginine GlcNAcyltransferase NleB</shortName>
        <shortName evidence="14">NleBc</shortName>
        <ecNumber evidence="4 9 11">2.4.1.-</ecNumber>
    </recommendedName>
    <alternativeName>
        <fullName evidence="12 13">Non-LEE-encoded type III effector B</fullName>
    </alternativeName>
</protein>
<feature type="chain" id="PRO_0000452590" description="Protein-arginine N-acetylglucosaminyltransferase NleB">
    <location>
        <begin position="1"/>
        <end position="329"/>
    </location>
</feature>
<feature type="short sequence motif" description="DXD motif" evidence="15">
    <location>
        <begin position="221"/>
        <end position="223"/>
    </location>
</feature>
<feature type="active site" description="Proton acceptor" evidence="1">
    <location>
        <position position="253"/>
    </location>
</feature>
<feature type="binding site" evidence="1">
    <location>
        <begin position="48"/>
        <end position="50"/>
    </location>
    <ligand>
        <name>UDP-N-acetyl-alpha-D-glucosamine</name>
        <dbReference type="ChEBI" id="CHEBI:57705"/>
    </ligand>
</feature>
<feature type="binding site" evidence="1">
    <location>
        <position position="72"/>
    </location>
    <ligand>
        <name>UDP-N-acetyl-alpha-D-glucosamine</name>
        <dbReference type="ChEBI" id="CHEBI:57705"/>
    </ligand>
</feature>
<feature type="binding site" evidence="1">
    <location>
        <begin position="219"/>
        <end position="222"/>
    </location>
    <ligand>
        <name>UDP-N-acetyl-alpha-D-glucosamine</name>
        <dbReference type="ChEBI" id="CHEBI:57705"/>
    </ligand>
</feature>
<feature type="binding site" evidence="1">
    <location>
        <position position="223"/>
    </location>
    <ligand>
        <name>Mn(2+)</name>
        <dbReference type="ChEBI" id="CHEBI:29035"/>
    </ligand>
</feature>
<feature type="binding site" evidence="1">
    <location>
        <position position="320"/>
    </location>
    <ligand>
        <name>Mn(2+)</name>
        <dbReference type="ChEBI" id="CHEBI:29035"/>
    </ligand>
</feature>
<feature type="binding site" evidence="1">
    <location>
        <position position="322"/>
    </location>
    <ligand>
        <name>Mn(2+)</name>
        <dbReference type="ChEBI" id="CHEBI:29035"/>
    </ligand>
</feature>
<feature type="binding site" evidence="1">
    <location>
        <position position="322"/>
    </location>
    <ligand>
        <name>UDP-N-acetyl-alpha-D-glucosamine</name>
        <dbReference type="ChEBI" id="CHEBI:57705"/>
    </ligand>
</feature>
<feature type="binding site" evidence="1">
    <location>
        <begin position="327"/>
        <end position="329"/>
    </location>
    <ligand>
        <name>UDP-N-acetyl-alpha-D-glucosamine</name>
        <dbReference type="ChEBI" id="CHEBI:57705"/>
    </ligand>
</feature>
<feature type="glycosylation site" description="N-beta-linked (GlcNAc) arginine; by autocatalysis" evidence="1">
    <location>
        <position position="13"/>
    </location>
</feature>
<feature type="glycosylation site" description="N-beta-linked (GlcNAc) arginine; by autocatalysis" evidence="1">
    <location>
        <position position="53"/>
    </location>
</feature>
<feature type="glycosylation site" description="N-beta-linked (GlcNAc) arginine; by autocatalysis" evidence="1">
    <location>
        <position position="159"/>
    </location>
</feature>
<feature type="glycosylation site" description="N-beta-linked (GlcNAc) arginine; by autocatalysis" evidence="1">
    <location>
        <position position="293"/>
    </location>
</feature>
<feature type="mutagenesis site" description="Reduced ability to promote bacterial colonization in mice." evidence="10">
    <original>W</original>
    <variation>A</variation>
    <location>
        <position position="49"/>
    </location>
</feature>
<feature type="mutagenesis site" description="Reduced ability to promote bacterial colonization in mice." evidence="10">
    <original>DFFR</original>
    <variation>AFFA</variation>
    <location>
        <begin position="186"/>
        <end position="189"/>
    </location>
</feature>
<feature type="mutagenesis site" description="Strongly reduced ability to promote bacterial colonization in mice." evidence="10">
    <original>D</original>
    <variation>A</variation>
    <location>
        <position position="186"/>
    </location>
</feature>
<feature type="mutagenesis site" description="Strongly reduced ability to promote bacterial colonization in mice." evidence="6 10">
    <original>Y</original>
    <variation>A</variation>
    <location>
        <position position="219"/>
    </location>
</feature>
<feature type="mutagenesis site" description="Abolished N-acetylglucosaminyltransferase activity and ability to disrupt host NF-kappa-B signaling and type I interferon production." evidence="3 7 11">
    <original>DAD</original>
    <variation>AAA</variation>
    <location>
        <begin position="221"/>
        <end position="223"/>
    </location>
</feature>
<feature type="mutagenesis site" description="Reduced ability to promote bacterial colonization in mice." evidence="6 10">
    <original>E</original>
    <variation>A</variation>
    <location>
        <position position="253"/>
    </location>
</feature>
<feature type="mutagenesis site" description="Strongly reduced ability to promote bacterial colonization in mice." evidence="10">
    <original>Y</original>
    <variation>A</variation>
    <location>
        <position position="283"/>
    </location>
</feature>
<feature type="sequence conflict" description="In Ref. 1; AAU95470." evidence="15" ref="1">
    <location>
        <position position="248"/>
    </location>
</feature>
<evidence type="ECO:0000250" key="1">
    <source>
        <dbReference type="UniProtKB" id="B7UI21"/>
    </source>
</evidence>
<evidence type="ECO:0000269" key="2">
    <source>
    </source>
</evidence>
<evidence type="ECO:0000269" key="3">
    <source>
    </source>
</evidence>
<evidence type="ECO:0000269" key="4">
    <source>
    </source>
</evidence>
<evidence type="ECO:0000269" key="5">
    <source>
    </source>
</evidence>
<evidence type="ECO:0000269" key="6">
    <source>
    </source>
</evidence>
<evidence type="ECO:0000269" key="7">
    <source>
    </source>
</evidence>
<evidence type="ECO:0000269" key="8">
    <source>
    </source>
</evidence>
<evidence type="ECO:0000269" key="9">
    <source>
    </source>
</evidence>
<evidence type="ECO:0000269" key="10">
    <source>
    </source>
</evidence>
<evidence type="ECO:0000269" key="11">
    <source>
    </source>
</evidence>
<evidence type="ECO:0000303" key="12">
    <source>
    </source>
</evidence>
<evidence type="ECO:0000303" key="13">
    <source>
    </source>
</evidence>
<evidence type="ECO:0000303" key="14">
    <source>
    </source>
</evidence>
<evidence type="ECO:0000305" key="15"/>
<evidence type="ECO:0000312" key="16">
    <source>
        <dbReference type="EMBL" id="QBY27713.1"/>
    </source>
</evidence>
<gene>
    <name evidence="12 13" type="primary">nleB</name>
    <name evidence="16" type="ORF">E2R62_01920</name>
</gene>
<organism>
    <name type="scientific">Citrobacter rodentium</name>
    <dbReference type="NCBI Taxonomy" id="67825"/>
    <lineage>
        <taxon>Bacteria</taxon>
        <taxon>Pseudomonadati</taxon>
        <taxon>Pseudomonadota</taxon>
        <taxon>Gammaproteobacteria</taxon>
        <taxon>Enterobacterales</taxon>
        <taxon>Enterobacteriaceae</taxon>
        <taxon>Citrobacter</taxon>
    </lineage>
</organism>
<dbReference type="EC" id="2.4.1.-" evidence="4 9 11"/>
<dbReference type="EMBL" id="AY747106">
    <property type="protein sequence ID" value="AAU95470.1"/>
    <property type="molecule type" value="Genomic_DNA"/>
</dbReference>
<dbReference type="EMBL" id="CP038008">
    <property type="protein sequence ID" value="QBY27713.1"/>
    <property type="molecule type" value="Genomic_DNA"/>
</dbReference>
<dbReference type="RefSeq" id="WP_012905389.1">
    <property type="nucleotide sequence ID" value="NZ_JXUN01000210.1"/>
</dbReference>
<dbReference type="SMR" id="A0A482PDI9"/>
<dbReference type="GlyCosmos" id="A0A482PDI9">
    <property type="glycosylation" value="4 sites, No reported glycans"/>
</dbReference>
<dbReference type="OMA" id="PIRTICH"/>
<dbReference type="GO" id="GO:0005576">
    <property type="term" value="C:extracellular region"/>
    <property type="evidence" value="ECO:0007669"/>
    <property type="project" value="UniProtKB-SubCell"/>
</dbReference>
<dbReference type="GO" id="GO:0043657">
    <property type="term" value="C:host cell"/>
    <property type="evidence" value="ECO:0000314"/>
    <property type="project" value="UniProtKB"/>
</dbReference>
<dbReference type="GO" id="GO:0016757">
    <property type="term" value="F:glycosyltransferase activity"/>
    <property type="evidence" value="ECO:0000314"/>
    <property type="project" value="UniProtKB"/>
</dbReference>
<dbReference type="GO" id="GO:0046872">
    <property type="term" value="F:metal ion binding"/>
    <property type="evidence" value="ECO:0007669"/>
    <property type="project" value="UniProtKB-KW"/>
</dbReference>
<dbReference type="GO" id="GO:0106362">
    <property type="term" value="F:protein-arginine N-acetylglucosaminyltransferase activity"/>
    <property type="evidence" value="ECO:0000314"/>
    <property type="project" value="UniProtKB"/>
</dbReference>
<dbReference type="GO" id="GO:0090729">
    <property type="term" value="F:toxin activity"/>
    <property type="evidence" value="ECO:0000314"/>
    <property type="project" value="UniProtKB"/>
</dbReference>
<dbReference type="GO" id="GO:0052031">
    <property type="term" value="P:symbiont-mediated perturbation of host defense response"/>
    <property type="evidence" value="ECO:0000314"/>
    <property type="project" value="UniProtKB"/>
</dbReference>
<dbReference type="GO" id="GO:0052040">
    <property type="term" value="P:symbiont-mediated perturbation of host programmed cell death"/>
    <property type="evidence" value="ECO:0000314"/>
    <property type="project" value="UniProtKB"/>
</dbReference>
<dbReference type="GO" id="GO:0085034">
    <property type="term" value="P:symbiont-mediated suppression of host NF-kappaB cascade"/>
    <property type="evidence" value="ECO:0000314"/>
    <property type="project" value="UniProtKB"/>
</dbReference>
<dbReference type="Gene3D" id="3.90.550.20">
    <property type="match status" value="1"/>
</dbReference>
<dbReference type="NCBIfam" id="NF011909">
    <property type="entry name" value="PRK15382.1"/>
    <property type="match status" value="1"/>
</dbReference>
<dbReference type="Pfam" id="PF24688">
    <property type="entry name" value="SseK_NleB"/>
    <property type="match status" value="1"/>
</dbReference>
<keyword id="KW-0325">Glycoprotein</keyword>
<keyword id="KW-0328">Glycosyltransferase</keyword>
<keyword id="KW-0464">Manganese</keyword>
<keyword id="KW-0479">Metal-binding</keyword>
<keyword id="KW-0964">Secreted</keyword>
<keyword id="KW-0800">Toxin</keyword>
<keyword id="KW-0808">Transferase</keyword>
<keyword id="KW-0843">Virulence</keyword>
<reference key="1">
    <citation type="journal article" date="2004" name="Proc. Natl. Acad. Sci. U.S.A.">
        <title>Dissecting virulence: systematic and functional analyses of a pathogenicity island.</title>
        <authorList>
            <person name="Deng W."/>
            <person name="Puente J.L."/>
            <person name="Gruenheid S."/>
            <person name="Li Y."/>
            <person name="Vallance B.A."/>
            <person name="Vazquez A."/>
            <person name="Barba J."/>
            <person name="Ibarra J.A."/>
            <person name="O'Donnell P."/>
            <person name="Metalnikov P."/>
            <person name="Ashman K."/>
            <person name="Lee S."/>
            <person name="Goode D."/>
            <person name="Pawson T."/>
            <person name="Finlay B.B."/>
        </authorList>
    </citation>
    <scope>NUCLEOTIDE SEQUENCE [GENOMIC DNA]</scope>
    <source>
        <strain>DBS100</strain>
    </source>
</reference>
<reference key="2">
    <citation type="journal article" date="2019" name="Microbiol. Resour. Announc.">
        <title>Complete Genome Sequence of Citrobacter rodentium Strain DBS100.</title>
        <authorList>
            <person name="Popov G."/>
            <person name="Fiebig-Comyn A."/>
            <person name="Shideler S."/>
            <person name="Coombes B.K."/>
            <person name="Savchenko A."/>
        </authorList>
    </citation>
    <scope>NUCLEOTIDE SEQUENCE [LARGE SCALE GENOMIC DNA]</scope>
    <source>
        <strain>DBS100</strain>
    </source>
</reference>
<reference key="3">
    <citation type="journal article" date="2006" name="Infect. Immun.">
        <title>Essential role of the type III secretion system effector NleB in colonization of mice by Citrobacter rodentium.</title>
        <authorList>
            <person name="Kelly M."/>
            <person name="Hart E."/>
            <person name="Mundy R."/>
            <person name="Marches O."/>
            <person name="Wiles S."/>
            <person name="Badea L."/>
            <person name="Luck S."/>
            <person name="Tauschek M."/>
            <person name="Frankel G."/>
            <person name="Robins-Browne R.M."/>
            <person name="Hartland E.L."/>
        </authorList>
    </citation>
    <scope>FUNCTION</scope>
    <scope>SUBCELLULAR LOCATION</scope>
</reference>
<reference key="4">
    <citation type="journal article" date="2013" name="Cell Host Microbe">
        <title>NleB, a bacterial effector with glycosyltransferase activity, targets GAPDH function to inhibit NF-kappaB activation.</title>
        <authorList>
            <person name="Gao X."/>
            <person name="Wang X."/>
            <person name="Pham T.H."/>
            <person name="Feuerbacher L.A."/>
            <person name="Lubos M.L."/>
            <person name="Huang M."/>
            <person name="Olsen R."/>
            <person name="Mushegian A."/>
            <person name="Slawson C."/>
            <person name="Hardwidge P.R."/>
        </authorList>
    </citation>
    <scope>FUNCTION</scope>
    <scope>MUTAGENESIS OF 221-ASP--ASP-223</scope>
</reference>
<reference key="5">
    <citation type="journal article" date="2013" name="Nature">
        <title>Pathogen blocks host death receptor signalling by arginine GlcNAcylation of death domains.</title>
        <authorList>
            <person name="Li S."/>
            <person name="Zhang L."/>
            <person name="Yao Q."/>
            <person name="Li L."/>
            <person name="Dong N."/>
            <person name="Rong J."/>
            <person name="Gao W."/>
            <person name="Ding X."/>
            <person name="Sun L."/>
            <person name="Chen X."/>
            <person name="Chen S."/>
            <person name="Shao F."/>
        </authorList>
    </citation>
    <scope>FUNCTION</scope>
    <scope>CATALYTIC ACTIVITY</scope>
    <scope>DISRUPTION PHENOTYPE</scope>
</reference>
<reference key="6">
    <citation type="journal article" date="2013" name="Nature">
        <title>A type III effector antagonizes death receptor signalling during bacterial gut infection.</title>
        <authorList>
            <person name="Pearson J.S."/>
            <person name="Giogha C."/>
            <person name="Ong S.Y."/>
            <person name="Kennedy C.L."/>
            <person name="Kelly M."/>
            <person name="Robinson K.S."/>
            <person name="Lung T.W."/>
            <person name="Mansell A."/>
            <person name="Riedmaier P."/>
            <person name="Oates C.V."/>
            <person name="Zaid A."/>
            <person name="Muehlen S."/>
            <person name="Crepin V.F."/>
            <person name="Marches O."/>
            <person name="Ang C.S."/>
            <person name="Williamson N.A."/>
            <person name="O'Reilly L.A."/>
            <person name="Bankovacki A."/>
            <person name="Nachbur U."/>
            <person name="Infusini G."/>
            <person name="Webb A.I."/>
            <person name="Silke J."/>
            <person name="Strasser A."/>
            <person name="Frankel G."/>
            <person name="Hartland E.L."/>
        </authorList>
    </citation>
    <scope>FUNCTION</scope>
</reference>
<reference key="7">
    <citation type="journal article" date="2016" name="Infect. Immun.">
        <title>Mutagenesis and functional analysis of the bacterial arginine glycosyltransferase effector NleB1 from enteropathogenic Escherichia coli.</title>
        <authorList>
            <person name="Wong Fok Lung T."/>
            <person name="Giogha C."/>
            <person name="Creuzburg K."/>
            <person name="Ong S.Y."/>
            <person name="Pollock G.L."/>
            <person name="Zhang Y."/>
            <person name="Fung K.Y."/>
            <person name="Pearson J.S."/>
            <person name="Hartland E.L."/>
        </authorList>
    </citation>
    <scope>MUTAGENESIS OF TYR-219 AND GLU-253</scope>
</reference>
<reference key="8">
    <citation type="journal article" date="2016" name="J. Biol. Chem.">
        <title>Citrobacter rodentium NleB protein inhibits tumor necrosis factor (TNF) receptor-associated factor 3 (TRAF3) ubiquitination to reduce host type I interferon production.</title>
        <authorList>
            <person name="Gao X."/>
            <person name="Pham T.H."/>
            <person name="Feuerbacher L.A."/>
            <person name="Chen K."/>
            <person name="Hays M.P."/>
            <person name="Singh G."/>
            <person name="Rueter C."/>
            <person name="Hurtado-Guerrero R."/>
            <person name="Hardwidge P.R."/>
        </authorList>
    </citation>
    <scope>FUNCTION</scope>
    <scope>MUTAGENESIS OF 221-ASP--ASP-223</scope>
</reference>
<reference key="9">
    <citation type="journal article" date="2017" name="J. Biol. Chem.">
        <title>NleB/SseK effectors from Citrobacter rodentium, Escherichia coli, and Salmonella enterica display distinct differences in host substrate specificity.</title>
        <authorList>
            <person name="El Qaidi S."/>
            <person name="Chen K."/>
            <person name="Halim A."/>
            <person name="Siukstaite L."/>
            <person name="Rueter C."/>
            <person name="Hurtado-Guerrero R."/>
            <person name="Clausen H."/>
            <person name="Hardwidge P.R."/>
        </authorList>
    </citation>
    <scope>FUNCTION</scope>
</reference>
<reference key="10">
    <citation type="journal article" date="2017" name="J. Biol. Chem.">
        <title>The bacterial arginine glycosyltransferase effector NleB preferentially modifies Fas-associated death domain protein (FADD).</title>
        <authorList>
            <person name="Scott N.E."/>
            <person name="Giogha C."/>
            <person name="Pollock G.L."/>
            <person name="Kennedy C.L."/>
            <person name="Webb A.I."/>
            <person name="Williamson N.A."/>
            <person name="Pearson J.S."/>
            <person name="Hartland E.L."/>
        </authorList>
    </citation>
    <scope>FUNCTION</scope>
    <scope>CATALYTIC ACTIVITY</scope>
</reference>
<reference key="11">
    <citation type="journal article" date="2020" name="Sci. Rep.">
        <title>An intra-bacterial activity for a T3SS effector.</title>
        <authorList>
            <person name="El Qaidi S."/>
            <person name="Scott N.E."/>
            <person name="Hays M.P."/>
            <person name="Geisbrecht B.V."/>
            <person name="Watkins S."/>
            <person name="Hardwidge P.R."/>
        </authorList>
    </citation>
    <scope>FUNCTION</scope>
    <scope>CATALYTIC ACTIVITY</scope>
    <scope>MUTAGENESIS OF 221-ASP--ASP-223</scope>
    <source>
        <strain>DBS100</strain>
    </source>
</reference>
<reference key="12">
    <citation type="journal article" date="2019" name="Mol. Cell">
        <title>Structural and functional insights into host death domains inactivation by the bacterial arginine GlcNAcyltransferase effector.</title>
        <authorList>
            <person name="Ding J."/>
            <person name="Pan X."/>
            <person name="Du L."/>
            <person name="Yao Q."/>
            <person name="Xue J."/>
            <person name="Yao H."/>
            <person name="Wang D.C."/>
            <person name="Li S."/>
            <person name="Shao F."/>
        </authorList>
    </citation>
    <scope>MUTAGENESIS OF TRP-49; 186-ASP--ARG-189; ASP-186; TYR-219; GLU-253 AND TYR-283</scope>
</reference>
<name>NLEB_CITRO</name>
<comment type="function">
    <text evidence="1 2 3 4 5 7 8 9 11">Protein-arginine N-acetylglucosaminyltransferase effector that disrupts TNF signaling in infected cells, including NF-kappa-B signaling, apoptosis and necroptosis (PubMed:16552063, PubMed:23955153, PubMed:24025841, PubMed:28522607). Acts by catalyzing the transfer of a single N-acetylglucosamine (GlcNAc) to a conserved arginine residue in the death domain of host proteins FADD, TNFRSF1A and RIPK1: arginine GlcNAcylation prevents homotypic/heterotypic death domain interactions and assembly of the oligomeric TNF-alpha receptor complex, thereby disrupting TNF signaling (PubMed:23955153, PubMed:28522607, PubMed:28860194). Has preference for host FADD as substrate compared to TNFRSF1A and RIPK1 (PubMed:28860194). Also acts on host proteins without a death domain: catalyzes GlcNAcylation of host GAPDH protein, thereby preventing GAPDH interaction with TRAF2 and TRAF3, leading to inhibit NF-kappa-B signaling and type I interferon production, respectively (PubMed:23332158, PubMed:27387501, PubMed:28522607). Also displays intra-bacterial activity by mediating GlcNAcylation of glutathione synthetase GshB (PubMed:31974499). Catalyzes auto-GlcNAcylation, which is required for activity toward death domain-containing host target proteins (By similarity).</text>
</comment>
<comment type="catalytic activity">
    <reaction evidence="4 9 11">
        <text>L-arginyl-[protein] + UDP-N-acetyl-alpha-D-glucosamine = N(omega)-(N-acetyl-beta-D-glucosaminyl)-L-arginyl-[protein] + UDP + H(+)</text>
        <dbReference type="Rhea" id="RHEA:66632"/>
        <dbReference type="Rhea" id="RHEA-COMP:10532"/>
        <dbReference type="Rhea" id="RHEA-COMP:17079"/>
        <dbReference type="ChEBI" id="CHEBI:15378"/>
        <dbReference type="ChEBI" id="CHEBI:29965"/>
        <dbReference type="ChEBI" id="CHEBI:57705"/>
        <dbReference type="ChEBI" id="CHEBI:58223"/>
        <dbReference type="ChEBI" id="CHEBI:167322"/>
    </reaction>
    <physiologicalReaction direction="left-to-right" evidence="4 9 11">
        <dbReference type="Rhea" id="RHEA:66633"/>
    </physiologicalReaction>
</comment>
<comment type="cofactor">
    <cofactor evidence="1">
        <name>Mn(2+)</name>
        <dbReference type="ChEBI" id="CHEBI:29035"/>
    </cofactor>
</comment>
<comment type="subcellular location">
    <subcellularLocation>
        <location evidence="2">Secreted</location>
    </subcellularLocation>
    <subcellularLocation>
        <location evidence="2">Host cell</location>
    </subcellularLocation>
    <text evidence="2">Secreted via the type III secretion system (T3SS).</text>
</comment>
<comment type="domain">
    <text evidence="1">Adopts a GT-A fold and acts as an inverting enzyme that converts the alpha-configuration in the UDP-N-acetyl-alpha-D-glucosamine donor to the beta configuration in the N-linked (GlcNAc) arginine product.</text>
</comment>
<comment type="PTM">
    <text evidence="1">Auto-glycosylated: arginine GlcNAcylation is required for activity toward death domain-containing host target proteins.</text>
</comment>
<comment type="disruption phenotype">
    <text evidence="2 4">Reduced colonization of mice in single infections and reduced colonic hyperplasia.</text>
</comment>
<comment type="similarity">
    <text evidence="15">Belongs to the glycosyltransferase NleB family.</text>
</comment>
<sequence>MLSPLNVLQFNFRGETALSDSAPLQTVSFAGKDYSMEPIDEKTPILFQWFEARPERYGKGEVPILNTKEHPYLSNIINAAKIENERVIGVLVDGDFTYEQRKEFLSLEDEHQNIKIIYRENVDFSMYDKKLSDIYLENIHEQESYPASERDNYLLGLLREELKNIPYGKDSLIESYAEKRGHTWFDFFRNLAVLKGGGLFTETGKTGCHNISPCGGCIYLDADMIITDKLGVLYAPDGIAVYVDCNDNRKSLENGAIVVNRSNHPALLAGLDIMKSKVDAHPYYDGVGKGLKRHFNYSSLQDYNVFCNFIEFKHKNIIPNTSMYTNSSW</sequence>
<accession>A0A482PDI9</accession>
<accession>Q5XMK8</accession>
<proteinExistence type="evidence at protein level"/>